<protein>
    <recommendedName>
        <fullName>Calmodulin-like protein 2</fullName>
    </recommendedName>
    <alternativeName>
        <fullName>Protein UNFERTILIZED EMBRYO SAC 14</fullName>
    </alternativeName>
</protein>
<evidence type="ECO:0000255" key="1">
    <source>
        <dbReference type="PROSITE-ProRule" id="PRU00448"/>
    </source>
</evidence>
<evidence type="ECO:0000269" key="2">
    <source>
    </source>
</evidence>
<evidence type="ECO:0000305" key="3"/>
<proteinExistence type="evidence at transcript level"/>
<feature type="chain" id="PRO_0000342885" description="Calmodulin-like protein 2">
    <location>
        <begin position="1"/>
        <end position="152"/>
    </location>
</feature>
<feature type="domain" description="EF-hand 1" evidence="1">
    <location>
        <begin position="1"/>
        <end position="36"/>
    </location>
</feature>
<feature type="domain" description="EF-hand 2" evidence="1">
    <location>
        <begin position="37"/>
        <end position="72"/>
    </location>
</feature>
<feature type="domain" description="EF-hand 3" evidence="1">
    <location>
        <begin position="74"/>
        <end position="109"/>
    </location>
</feature>
<feature type="domain" description="EF-hand 4" evidence="1">
    <location>
        <begin position="112"/>
        <end position="147"/>
    </location>
</feature>
<feature type="binding site" evidence="1">
    <location>
        <position position="14"/>
    </location>
    <ligand>
        <name>Ca(2+)</name>
        <dbReference type="ChEBI" id="CHEBI:29108"/>
        <label>1</label>
    </ligand>
</feature>
<feature type="binding site" evidence="1">
    <location>
        <position position="16"/>
    </location>
    <ligand>
        <name>Ca(2+)</name>
        <dbReference type="ChEBI" id="CHEBI:29108"/>
        <label>1</label>
    </ligand>
</feature>
<feature type="binding site" evidence="1">
    <location>
        <position position="18"/>
    </location>
    <ligand>
        <name>Ca(2+)</name>
        <dbReference type="ChEBI" id="CHEBI:29108"/>
        <label>1</label>
    </ligand>
</feature>
<feature type="binding site" evidence="1">
    <location>
        <position position="20"/>
    </location>
    <ligand>
        <name>Ca(2+)</name>
        <dbReference type="ChEBI" id="CHEBI:29108"/>
        <label>1</label>
    </ligand>
</feature>
<feature type="binding site" evidence="1">
    <location>
        <position position="25"/>
    </location>
    <ligand>
        <name>Ca(2+)</name>
        <dbReference type="ChEBI" id="CHEBI:29108"/>
        <label>1</label>
    </ligand>
</feature>
<feature type="binding site" evidence="1">
    <location>
        <position position="50"/>
    </location>
    <ligand>
        <name>Ca(2+)</name>
        <dbReference type="ChEBI" id="CHEBI:29108"/>
        <label>2</label>
    </ligand>
</feature>
<feature type="binding site" evidence="1">
    <location>
        <position position="52"/>
    </location>
    <ligand>
        <name>Ca(2+)</name>
        <dbReference type="ChEBI" id="CHEBI:29108"/>
        <label>2</label>
    </ligand>
</feature>
<feature type="binding site" evidence="1">
    <location>
        <position position="54"/>
    </location>
    <ligand>
        <name>Ca(2+)</name>
        <dbReference type="ChEBI" id="CHEBI:29108"/>
        <label>2</label>
    </ligand>
</feature>
<feature type="binding site" evidence="1">
    <location>
        <position position="61"/>
    </location>
    <ligand>
        <name>Ca(2+)</name>
        <dbReference type="ChEBI" id="CHEBI:29108"/>
        <label>2</label>
    </ligand>
</feature>
<feature type="binding site" evidence="1">
    <location>
        <position position="87"/>
    </location>
    <ligand>
        <name>Ca(2+)</name>
        <dbReference type="ChEBI" id="CHEBI:29108"/>
        <label>3</label>
    </ligand>
</feature>
<feature type="binding site" evidence="1">
    <location>
        <position position="89"/>
    </location>
    <ligand>
        <name>Ca(2+)</name>
        <dbReference type="ChEBI" id="CHEBI:29108"/>
        <label>3</label>
    </ligand>
</feature>
<feature type="binding site" evidence="1">
    <location>
        <position position="91"/>
    </location>
    <ligand>
        <name>Ca(2+)</name>
        <dbReference type="ChEBI" id="CHEBI:29108"/>
        <label>3</label>
    </ligand>
</feature>
<feature type="binding site" evidence="1">
    <location>
        <position position="98"/>
    </location>
    <ligand>
        <name>Ca(2+)</name>
        <dbReference type="ChEBI" id="CHEBI:29108"/>
        <label>3</label>
    </ligand>
</feature>
<feature type="binding site" evidence="1">
    <location>
        <position position="125"/>
    </location>
    <ligand>
        <name>Ca(2+)</name>
        <dbReference type="ChEBI" id="CHEBI:29108"/>
        <label>4</label>
    </ligand>
</feature>
<feature type="binding site" evidence="1">
    <location>
        <position position="127"/>
    </location>
    <ligand>
        <name>Ca(2+)</name>
        <dbReference type="ChEBI" id="CHEBI:29108"/>
        <label>4</label>
    </ligand>
</feature>
<feature type="binding site" evidence="1">
    <location>
        <position position="129"/>
    </location>
    <ligand>
        <name>Ca(2+)</name>
        <dbReference type="ChEBI" id="CHEBI:29108"/>
        <label>4</label>
    </ligand>
</feature>
<feature type="binding site" evidence="1">
    <location>
        <position position="131"/>
    </location>
    <ligand>
        <name>Ca(2+)</name>
        <dbReference type="ChEBI" id="CHEBI:29108"/>
        <label>4</label>
    </ligand>
</feature>
<feature type="binding site" evidence="1">
    <location>
        <position position="136"/>
    </location>
    <ligand>
        <name>Ca(2+)</name>
        <dbReference type="ChEBI" id="CHEBI:29108"/>
        <label>4</label>
    </ligand>
</feature>
<reference key="1">
    <citation type="journal article" date="1999" name="Nature">
        <title>Sequence and analysis of chromosome 4 of the plant Arabidopsis thaliana.</title>
        <authorList>
            <person name="Mayer K.F.X."/>
            <person name="Schueller C."/>
            <person name="Wambutt R."/>
            <person name="Murphy G."/>
            <person name="Volckaert G."/>
            <person name="Pohl T."/>
            <person name="Duesterhoeft A."/>
            <person name="Stiekema W."/>
            <person name="Entian K.-D."/>
            <person name="Terryn N."/>
            <person name="Harris B."/>
            <person name="Ansorge W."/>
            <person name="Brandt P."/>
            <person name="Grivell L.A."/>
            <person name="Rieger M."/>
            <person name="Weichselgartner M."/>
            <person name="de Simone V."/>
            <person name="Obermaier B."/>
            <person name="Mache R."/>
            <person name="Mueller M."/>
            <person name="Kreis M."/>
            <person name="Delseny M."/>
            <person name="Puigdomenech P."/>
            <person name="Watson M."/>
            <person name="Schmidtheini T."/>
            <person name="Reichert B."/>
            <person name="Portetelle D."/>
            <person name="Perez-Alonso M."/>
            <person name="Boutry M."/>
            <person name="Bancroft I."/>
            <person name="Vos P."/>
            <person name="Hoheisel J."/>
            <person name="Zimmermann W."/>
            <person name="Wedler H."/>
            <person name="Ridley P."/>
            <person name="Langham S.-A."/>
            <person name="McCullagh B."/>
            <person name="Bilham L."/>
            <person name="Robben J."/>
            <person name="van der Schueren J."/>
            <person name="Grymonprez B."/>
            <person name="Chuang Y.-J."/>
            <person name="Vandenbussche F."/>
            <person name="Braeken M."/>
            <person name="Weltjens I."/>
            <person name="Voet M."/>
            <person name="Bastiaens I."/>
            <person name="Aert R."/>
            <person name="Defoor E."/>
            <person name="Weitzenegger T."/>
            <person name="Bothe G."/>
            <person name="Ramsperger U."/>
            <person name="Hilbert H."/>
            <person name="Braun M."/>
            <person name="Holzer E."/>
            <person name="Brandt A."/>
            <person name="Peters S."/>
            <person name="van Staveren M."/>
            <person name="Dirkse W."/>
            <person name="Mooijman P."/>
            <person name="Klein Lankhorst R."/>
            <person name="Rose M."/>
            <person name="Hauf J."/>
            <person name="Koetter P."/>
            <person name="Berneiser S."/>
            <person name="Hempel S."/>
            <person name="Feldpausch M."/>
            <person name="Lamberth S."/>
            <person name="Van den Daele H."/>
            <person name="De Keyser A."/>
            <person name="Buysshaert C."/>
            <person name="Gielen J."/>
            <person name="Villarroel R."/>
            <person name="De Clercq R."/>
            <person name="van Montagu M."/>
            <person name="Rogers J."/>
            <person name="Cronin A."/>
            <person name="Quail M.A."/>
            <person name="Bray-Allen S."/>
            <person name="Clark L."/>
            <person name="Doggett J."/>
            <person name="Hall S."/>
            <person name="Kay M."/>
            <person name="Lennard N."/>
            <person name="McLay K."/>
            <person name="Mayes R."/>
            <person name="Pettett A."/>
            <person name="Rajandream M.A."/>
            <person name="Lyne M."/>
            <person name="Benes V."/>
            <person name="Rechmann S."/>
            <person name="Borkova D."/>
            <person name="Bloecker H."/>
            <person name="Scharfe M."/>
            <person name="Grimm M."/>
            <person name="Loehnert T.-H."/>
            <person name="Dose S."/>
            <person name="de Haan M."/>
            <person name="Maarse A.C."/>
            <person name="Schaefer M."/>
            <person name="Mueller-Auer S."/>
            <person name="Gabel C."/>
            <person name="Fuchs M."/>
            <person name="Fartmann B."/>
            <person name="Granderath K."/>
            <person name="Dauner D."/>
            <person name="Herzl A."/>
            <person name="Neumann S."/>
            <person name="Argiriou A."/>
            <person name="Vitale D."/>
            <person name="Liguori R."/>
            <person name="Piravandi E."/>
            <person name="Massenet O."/>
            <person name="Quigley F."/>
            <person name="Clabauld G."/>
            <person name="Muendlein A."/>
            <person name="Felber R."/>
            <person name="Schnabl S."/>
            <person name="Hiller R."/>
            <person name="Schmidt W."/>
            <person name="Lecharny A."/>
            <person name="Aubourg S."/>
            <person name="Chefdor F."/>
            <person name="Cooke R."/>
            <person name="Berger C."/>
            <person name="Monfort A."/>
            <person name="Casacuberta E."/>
            <person name="Gibbons T."/>
            <person name="Weber N."/>
            <person name="Vandenbol M."/>
            <person name="Bargues M."/>
            <person name="Terol J."/>
            <person name="Torres A."/>
            <person name="Perez-Perez A."/>
            <person name="Purnelle B."/>
            <person name="Bent E."/>
            <person name="Johnson S."/>
            <person name="Tacon D."/>
            <person name="Jesse T."/>
            <person name="Heijnen L."/>
            <person name="Schwarz S."/>
            <person name="Scholler P."/>
            <person name="Heber S."/>
            <person name="Francs P."/>
            <person name="Bielke C."/>
            <person name="Frishman D."/>
            <person name="Haase D."/>
            <person name="Lemcke K."/>
            <person name="Mewes H.-W."/>
            <person name="Stocker S."/>
            <person name="Zaccaria P."/>
            <person name="Bevan M."/>
            <person name="Wilson R.K."/>
            <person name="de la Bastide M."/>
            <person name="Habermann K."/>
            <person name="Parnell L."/>
            <person name="Dedhia N."/>
            <person name="Gnoj L."/>
            <person name="Schutz K."/>
            <person name="Huang E."/>
            <person name="Spiegel L."/>
            <person name="Sekhon M."/>
            <person name="Murray J."/>
            <person name="Sheet P."/>
            <person name="Cordes M."/>
            <person name="Abu-Threideh J."/>
            <person name="Stoneking T."/>
            <person name="Kalicki J."/>
            <person name="Graves T."/>
            <person name="Harmon G."/>
            <person name="Edwards J."/>
            <person name="Latreille P."/>
            <person name="Courtney L."/>
            <person name="Cloud J."/>
            <person name="Abbott A."/>
            <person name="Scott K."/>
            <person name="Johnson D."/>
            <person name="Minx P."/>
            <person name="Bentley D."/>
            <person name="Fulton B."/>
            <person name="Miller N."/>
            <person name="Greco T."/>
            <person name="Kemp K."/>
            <person name="Kramer J."/>
            <person name="Fulton L."/>
            <person name="Mardis E."/>
            <person name="Dante M."/>
            <person name="Pepin K."/>
            <person name="Hillier L.W."/>
            <person name="Nelson J."/>
            <person name="Spieth J."/>
            <person name="Ryan E."/>
            <person name="Andrews S."/>
            <person name="Geisel C."/>
            <person name="Layman D."/>
            <person name="Du H."/>
            <person name="Ali J."/>
            <person name="Berghoff A."/>
            <person name="Jones K."/>
            <person name="Drone K."/>
            <person name="Cotton M."/>
            <person name="Joshu C."/>
            <person name="Antonoiu B."/>
            <person name="Zidanic M."/>
            <person name="Strong C."/>
            <person name="Sun H."/>
            <person name="Lamar B."/>
            <person name="Yordan C."/>
            <person name="Ma P."/>
            <person name="Zhong J."/>
            <person name="Preston R."/>
            <person name="Vil D."/>
            <person name="Shekher M."/>
            <person name="Matero A."/>
            <person name="Shah R."/>
            <person name="Swaby I.K."/>
            <person name="O'Shaughnessy A."/>
            <person name="Rodriguez M."/>
            <person name="Hoffman J."/>
            <person name="Till S."/>
            <person name="Granat S."/>
            <person name="Shohdy N."/>
            <person name="Hasegawa A."/>
            <person name="Hameed A."/>
            <person name="Lodhi M."/>
            <person name="Johnson A."/>
            <person name="Chen E."/>
            <person name="Marra M.A."/>
            <person name="Martienssen R."/>
            <person name="McCombie W.R."/>
        </authorList>
    </citation>
    <scope>NUCLEOTIDE SEQUENCE [LARGE SCALE GENOMIC DNA]</scope>
    <source>
        <strain>cv. Columbia</strain>
    </source>
</reference>
<reference key="2">
    <citation type="journal article" date="2017" name="Plant J.">
        <title>Araport11: a complete reannotation of the Arabidopsis thaliana reference genome.</title>
        <authorList>
            <person name="Cheng C.Y."/>
            <person name="Krishnakumar V."/>
            <person name="Chan A.P."/>
            <person name="Thibaud-Nissen F."/>
            <person name="Schobel S."/>
            <person name="Town C.D."/>
        </authorList>
    </citation>
    <scope>GENOME REANNOTATION</scope>
    <source>
        <strain>cv. Columbia</strain>
    </source>
</reference>
<reference key="3">
    <citation type="submission" date="2005-05" db="EMBL/GenBank/DDBJ databases">
        <authorList>
            <person name="Underwood B.A."/>
            <person name="Xiao Y.-L."/>
            <person name="Moskal W.A. Jr."/>
            <person name="Monaghan E.L."/>
            <person name="Wang W."/>
            <person name="Redman J.C."/>
            <person name="Wu H.C."/>
            <person name="Utterback T."/>
            <person name="Town C.D."/>
        </authorList>
    </citation>
    <scope>NUCLEOTIDE SEQUENCE [LARGE SCALE MRNA]</scope>
    <source>
        <strain>cv. Columbia</strain>
    </source>
</reference>
<reference key="4">
    <citation type="journal article" date="2003" name="New Phytol.">
        <title>Calmodulins and related potential calcium sensors of Arabidopsis.</title>
        <authorList>
            <person name="McCormack E."/>
            <person name="Braam J."/>
        </authorList>
    </citation>
    <scope>GENE FAMILY</scope>
    <scope>NOMENCLATURE</scope>
</reference>
<reference key="5">
    <citation type="journal article" date="2005" name="Development">
        <title>Genetic and molecular identification of genes required for female gametophyte development and function in Arabidopsis.</title>
        <authorList>
            <person name="Pagnussat G.C."/>
            <person name="Yu H.-J."/>
            <person name="Ngo Q.A."/>
            <person name="Rajani S."/>
            <person name="Mayalagu S."/>
            <person name="Johnson C.S."/>
            <person name="Capron A."/>
            <person name="Xie L.-F."/>
            <person name="Ye D."/>
            <person name="Sundaresan V."/>
        </authorList>
    </citation>
    <scope>FUNCTION</scope>
</reference>
<organism>
    <name type="scientific">Arabidopsis thaliana</name>
    <name type="common">Mouse-ear cress</name>
    <dbReference type="NCBI Taxonomy" id="3702"/>
    <lineage>
        <taxon>Eukaryota</taxon>
        <taxon>Viridiplantae</taxon>
        <taxon>Streptophyta</taxon>
        <taxon>Embryophyta</taxon>
        <taxon>Tracheophyta</taxon>
        <taxon>Spermatophyta</taxon>
        <taxon>Magnoliopsida</taxon>
        <taxon>eudicotyledons</taxon>
        <taxon>Gunneridae</taxon>
        <taxon>Pentapetalae</taxon>
        <taxon>rosids</taxon>
        <taxon>malvids</taxon>
        <taxon>Brassicales</taxon>
        <taxon>Brassicaceae</taxon>
        <taxon>Camelineae</taxon>
        <taxon>Arabidopsis</taxon>
    </lineage>
</organism>
<comment type="function">
    <text evidence="2">Potential calcium sensor that is required for pollen tube attraction for ovule fertilization.</text>
</comment>
<comment type="similarity">
    <text evidence="3">Belongs to the calmodulin family.</text>
</comment>
<dbReference type="EMBL" id="AL049640">
    <property type="protein sequence ID" value="CAB41003.1"/>
    <property type="molecule type" value="Genomic_DNA"/>
</dbReference>
<dbReference type="EMBL" id="AL161535">
    <property type="protein sequence ID" value="CAB78328.1"/>
    <property type="molecule type" value="Genomic_DNA"/>
</dbReference>
<dbReference type="EMBL" id="CP002687">
    <property type="protein sequence ID" value="AEE83196.1"/>
    <property type="molecule type" value="Genomic_DNA"/>
</dbReference>
<dbReference type="EMBL" id="DQ056648">
    <property type="protein sequence ID" value="AAY78795.1"/>
    <property type="molecule type" value="mRNA"/>
</dbReference>
<dbReference type="PIR" id="T06644">
    <property type="entry name" value="T06644"/>
</dbReference>
<dbReference type="RefSeq" id="NP_193022.1">
    <property type="nucleotide sequence ID" value="NM_117355.1"/>
</dbReference>
<dbReference type="SMR" id="Q9SU00"/>
<dbReference type="FunCoup" id="Q9SU00">
    <property type="interactions" value="231"/>
</dbReference>
<dbReference type="STRING" id="3702.Q9SU00"/>
<dbReference type="PaxDb" id="3702-AT4G12860.1"/>
<dbReference type="ProteomicsDB" id="240899"/>
<dbReference type="EnsemblPlants" id="AT4G12860.1">
    <property type="protein sequence ID" value="AT4G12860.1"/>
    <property type="gene ID" value="AT4G12860"/>
</dbReference>
<dbReference type="GeneID" id="826898"/>
<dbReference type="Gramene" id="AT4G12860.1">
    <property type="protein sequence ID" value="AT4G12860.1"/>
    <property type="gene ID" value="AT4G12860"/>
</dbReference>
<dbReference type="KEGG" id="ath:AT4G12860"/>
<dbReference type="Araport" id="AT4G12860"/>
<dbReference type="TAIR" id="AT4G12860">
    <property type="gene designation" value="UNE14"/>
</dbReference>
<dbReference type="eggNOG" id="KOG0027">
    <property type="taxonomic scope" value="Eukaryota"/>
</dbReference>
<dbReference type="HOGENOM" id="CLU_061288_20_3_1"/>
<dbReference type="InParanoid" id="Q9SU00"/>
<dbReference type="OMA" id="CEVVAHF"/>
<dbReference type="OrthoDB" id="26525at2759"/>
<dbReference type="PhylomeDB" id="Q9SU00"/>
<dbReference type="PRO" id="PR:Q9SU00"/>
<dbReference type="Proteomes" id="UP000006548">
    <property type="component" value="Chromosome 4"/>
</dbReference>
<dbReference type="ExpressionAtlas" id="Q9SU00">
    <property type="expression patterns" value="baseline"/>
</dbReference>
<dbReference type="GO" id="GO:0005737">
    <property type="term" value="C:cytoplasm"/>
    <property type="evidence" value="ECO:0000314"/>
    <property type="project" value="TAIR"/>
</dbReference>
<dbReference type="GO" id="GO:0005509">
    <property type="term" value="F:calcium ion binding"/>
    <property type="evidence" value="ECO:0007669"/>
    <property type="project" value="InterPro"/>
</dbReference>
<dbReference type="GO" id="GO:0009567">
    <property type="term" value="P:double fertilization forming a zygote and endosperm"/>
    <property type="evidence" value="ECO:0000315"/>
    <property type="project" value="TAIR"/>
</dbReference>
<dbReference type="CDD" id="cd00051">
    <property type="entry name" value="EFh"/>
    <property type="match status" value="2"/>
</dbReference>
<dbReference type="FunFam" id="1.10.238.10:FF:000001">
    <property type="entry name" value="Calmodulin 1"/>
    <property type="match status" value="1"/>
</dbReference>
<dbReference type="Gene3D" id="1.10.238.10">
    <property type="entry name" value="EF-hand"/>
    <property type="match status" value="2"/>
</dbReference>
<dbReference type="InterPro" id="IPR011992">
    <property type="entry name" value="EF-hand-dom_pair"/>
</dbReference>
<dbReference type="InterPro" id="IPR018247">
    <property type="entry name" value="EF_Hand_1_Ca_BS"/>
</dbReference>
<dbReference type="InterPro" id="IPR002048">
    <property type="entry name" value="EF_hand_dom"/>
</dbReference>
<dbReference type="InterPro" id="IPR039647">
    <property type="entry name" value="EF_hand_pair_protein_CML-like"/>
</dbReference>
<dbReference type="PANTHER" id="PTHR10891">
    <property type="entry name" value="EF-HAND CALCIUM-BINDING DOMAIN CONTAINING PROTEIN"/>
    <property type="match status" value="1"/>
</dbReference>
<dbReference type="Pfam" id="PF13499">
    <property type="entry name" value="EF-hand_7"/>
    <property type="match status" value="2"/>
</dbReference>
<dbReference type="PRINTS" id="PR01697">
    <property type="entry name" value="PARVALBUMIN"/>
</dbReference>
<dbReference type="SMART" id="SM00054">
    <property type="entry name" value="EFh"/>
    <property type="match status" value="4"/>
</dbReference>
<dbReference type="SUPFAM" id="SSF47473">
    <property type="entry name" value="EF-hand"/>
    <property type="match status" value="1"/>
</dbReference>
<dbReference type="PROSITE" id="PS00018">
    <property type="entry name" value="EF_HAND_1"/>
    <property type="match status" value="4"/>
</dbReference>
<dbReference type="PROSITE" id="PS50222">
    <property type="entry name" value="EF_HAND_2"/>
    <property type="match status" value="4"/>
</dbReference>
<sequence>MDRGELSRVFQMFDKNGDGKIAKNELKDFFKSVGIMVPENEINEMIAKMDVNGDGAMDIDEFGSLYQEMVEEKEEEEDMREAFRVFDQNGDGFITDEELRSVLASMGLKQGRTLEDCKKMISKVDVDGDGMVNFKEFKQMMRGGGFAALSSN</sequence>
<keyword id="KW-0106">Calcium</keyword>
<keyword id="KW-0479">Metal-binding</keyword>
<keyword id="KW-1185">Reference proteome</keyword>
<keyword id="KW-0677">Repeat</keyword>
<accession>Q9SU00</accession>
<name>CML2_ARATH</name>
<gene>
    <name type="primary">CML2</name>
    <name type="synonym">UNE14</name>
    <name type="ordered locus">At4g12860</name>
    <name type="ORF">T20K18.210</name>
</gene>